<gene>
    <name type="ORF">DDB_G0287457</name>
</gene>
<accession>Q54KF2</accession>
<name>Y7452_DICDI</name>
<proteinExistence type="predicted"/>
<dbReference type="EMBL" id="AAFI02000100">
    <property type="protein sequence ID" value="EAL63796.1"/>
    <property type="status" value="ALT_SEQ"/>
    <property type="molecule type" value="Genomic_DNA"/>
</dbReference>
<dbReference type="RefSeq" id="XP_637271.1">
    <property type="nucleotide sequence ID" value="XM_632179.1"/>
</dbReference>
<dbReference type="SMR" id="Q54KF2"/>
<dbReference type="FunCoup" id="Q54KF2">
    <property type="interactions" value="877"/>
</dbReference>
<dbReference type="STRING" id="44689.Q54KF2"/>
<dbReference type="PaxDb" id="44689-DDB0187452"/>
<dbReference type="EnsemblProtists" id="EAL63796">
    <property type="protein sequence ID" value="EAL63796"/>
    <property type="gene ID" value="DDB_G0287457"/>
</dbReference>
<dbReference type="GeneID" id="8626102"/>
<dbReference type="KEGG" id="ddi:DDB_G0287457"/>
<dbReference type="dictyBase" id="DDB_G0287457"/>
<dbReference type="VEuPathDB" id="AmoebaDB:DDB_G0287457"/>
<dbReference type="eggNOG" id="ENOG502RHDS">
    <property type="taxonomic scope" value="Eukaryota"/>
</dbReference>
<dbReference type="InParanoid" id="Q54KF2"/>
<dbReference type="PRO" id="PR:Q54KF2"/>
<dbReference type="Proteomes" id="UP000002195">
    <property type="component" value="Chromosome 5"/>
</dbReference>
<keyword id="KW-1185">Reference proteome</keyword>
<feature type="chain" id="PRO_0000347027" description="Putative uncharacterized protein DDB_G0287457">
    <location>
        <begin position="1"/>
        <end position="777"/>
    </location>
</feature>
<feature type="region of interest" description="Disordered" evidence="1">
    <location>
        <begin position="1"/>
        <end position="101"/>
    </location>
</feature>
<feature type="region of interest" description="Disordered" evidence="1">
    <location>
        <begin position="128"/>
        <end position="150"/>
    </location>
</feature>
<feature type="region of interest" description="Disordered" evidence="1">
    <location>
        <begin position="219"/>
        <end position="267"/>
    </location>
</feature>
<feature type="region of interest" description="Disordered" evidence="1">
    <location>
        <begin position="334"/>
        <end position="366"/>
    </location>
</feature>
<feature type="region of interest" description="Disordered" evidence="1">
    <location>
        <begin position="391"/>
        <end position="466"/>
    </location>
</feature>
<feature type="region of interest" description="Disordered" evidence="1">
    <location>
        <begin position="529"/>
        <end position="577"/>
    </location>
</feature>
<feature type="region of interest" description="Disordered" evidence="1">
    <location>
        <begin position="590"/>
        <end position="622"/>
    </location>
</feature>
<feature type="region of interest" description="Disordered" evidence="1">
    <location>
        <begin position="713"/>
        <end position="751"/>
    </location>
</feature>
<feature type="compositionally biased region" description="Low complexity" evidence="1">
    <location>
        <begin position="128"/>
        <end position="147"/>
    </location>
</feature>
<feature type="compositionally biased region" description="Low complexity" evidence="1">
    <location>
        <begin position="243"/>
        <end position="265"/>
    </location>
</feature>
<feature type="compositionally biased region" description="Polar residues" evidence="1">
    <location>
        <begin position="334"/>
        <end position="343"/>
    </location>
</feature>
<feature type="compositionally biased region" description="Acidic residues" evidence="1">
    <location>
        <begin position="344"/>
        <end position="366"/>
    </location>
</feature>
<feature type="compositionally biased region" description="Polar residues" evidence="1">
    <location>
        <begin position="391"/>
        <end position="407"/>
    </location>
</feature>
<feature type="compositionally biased region" description="Low complexity" evidence="1">
    <location>
        <begin position="408"/>
        <end position="466"/>
    </location>
</feature>
<feature type="compositionally biased region" description="Low complexity" evidence="1">
    <location>
        <begin position="532"/>
        <end position="574"/>
    </location>
</feature>
<feature type="compositionally biased region" description="Basic and acidic residues" evidence="1">
    <location>
        <begin position="597"/>
        <end position="606"/>
    </location>
</feature>
<feature type="compositionally biased region" description="Acidic residues" evidence="1">
    <location>
        <begin position="607"/>
        <end position="620"/>
    </location>
</feature>
<feature type="compositionally biased region" description="Acidic residues" evidence="1">
    <location>
        <begin position="718"/>
        <end position="730"/>
    </location>
</feature>
<feature type="compositionally biased region" description="Low complexity" evidence="1">
    <location>
        <begin position="731"/>
        <end position="740"/>
    </location>
</feature>
<reference key="1">
    <citation type="journal article" date="2005" name="Nature">
        <title>The genome of the social amoeba Dictyostelium discoideum.</title>
        <authorList>
            <person name="Eichinger L."/>
            <person name="Pachebat J.A."/>
            <person name="Gloeckner G."/>
            <person name="Rajandream M.A."/>
            <person name="Sucgang R."/>
            <person name="Berriman M."/>
            <person name="Song J."/>
            <person name="Olsen R."/>
            <person name="Szafranski K."/>
            <person name="Xu Q."/>
            <person name="Tunggal B."/>
            <person name="Kummerfeld S."/>
            <person name="Madera M."/>
            <person name="Konfortov B.A."/>
            <person name="Rivero F."/>
            <person name="Bankier A.T."/>
            <person name="Lehmann R."/>
            <person name="Hamlin N."/>
            <person name="Davies R."/>
            <person name="Gaudet P."/>
            <person name="Fey P."/>
            <person name="Pilcher K."/>
            <person name="Chen G."/>
            <person name="Saunders D."/>
            <person name="Sodergren E.J."/>
            <person name="Davis P."/>
            <person name="Kerhornou A."/>
            <person name="Nie X."/>
            <person name="Hall N."/>
            <person name="Anjard C."/>
            <person name="Hemphill L."/>
            <person name="Bason N."/>
            <person name="Farbrother P."/>
            <person name="Desany B."/>
            <person name="Just E."/>
            <person name="Morio T."/>
            <person name="Rost R."/>
            <person name="Churcher C.M."/>
            <person name="Cooper J."/>
            <person name="Haydock S."/>
            <person name="van Driessche N."/>
            <person name="Cronin A."/>
            <person name="Goodhead I."/>
            <person name="Muzny D.M."/>
            <person name="Mourier T."/>
            <person name="Pain A."/>
            <person name="Lu M."/>
            <person name="Harper D."/>
            <person name="Lindsay R."/>
            <person name="Hauser H."/>
            <person name="James K.D."/>
            <person name="Quiles M."/>
            <person name="Madan Babu M."/>
            <person name="Saito T."/>
            <person name="Buchrieser C."/>
            <person name="Wardroper A."/>
            <person name="Felder M."/>
            <person name="Thangavelu M."/>
            <person name="Johnson D."/>
            <person name="Knights A."/>
            <person name="Loulseged H."/>
            <person name="Mungall K.L."/>
            <person name="Oliver K."/>
            <person name="Price C."/>
            <person name="Quail M.A."/>
            <person name="Urushihara H."/>
            <person name="Hernandez J."/>
            <person name="Rabbinowitsch E."/>
            <person name="Steffen D."/>
            <person name="Sanders M."/>
            <person name="Ma J."/>
            <person name="Kohara Y."/>
            <person name="Sharp S."/>
            <person name="Simmonds M.N."/>
            <person name="Spiegler S."/>
            <person name="Tivey A."/>
            <person name="Sugano S."/>
            <person name="White B."/>
            <person name="Walker D."/>
            <person name="Woodward J.R."/>
            <person name="Winckler T."/>
            <person name="Tanaka Y."/>
            <person name="Shaulsky G."/>
            <person name="Schleicher M."/>
            <person name="Weinstock G.M."/>
            <person name="Rosenthal A."/>
            <person name="Cox E.C."/>
            <person name="Chisholm R.L."/>
            <person name="Gibbs R.A."/>
            <person name="Loomis W.F."/>
            <person name="Platzer M."/>
            <person name="Kay R.R."/>
            <person name="Williams J.G."/>
            <person name="Dear P.H."/>
            <person name="Noegel A.A."/>
            <person name="Barrell B.G."/>
            <person name="Kuspa A."/>
        </authorList>
    </citation>
    <scope>NUCLEOTIDE SEQUENCE [LARGE SCALE GENOMIC DNA]</scope>
    <source>
        <strain>AX4</strain>
    </source>
</reference>
<comment type="sequence caution" evidence="2">
    <conflict type="erroneous gene model prediction">
        <sequence resource="EMBL-CDS" id="EAL63796"/>
    </conflict>
</comment>
<organism>
    <name type="scientific">Dictyostelium discoideum</name>
    <name type="common">Social amoeba</name>
    <dbReference type="NCBI Taxonomy" id="44689"/>
    <lineage>
        <taxon>Eukaryota</taxon>
        <taxon>Amoebozoa</taxon>
        <taxon>Evosea</taxon>
        <taxon>Eumycetozoa</taxon>
        <taxon>Dictyostelia</taxon>
        <taxon>Dictyosteliales</taxon>
        <taxon>Dictyosteliaceae</taxon>
        <taxon>Dictyostelium</taxon>
    </lineage>
</organism>
<protein>
    <recommendedName>
        <fullName>Putative uncharacterized protein DDB_G0287457</fullName>
    </recommendedName>
</protein>
<sequence length="777" mass="89349">MNNNNNNNNNNNNNNNNNNNNNSNNNDNNYKNNSNNSNNKNNNNNNNNDDNNSSNNNNNNNNNNNNNNNNSNNNNNNNNNNSNNNNNNNDKNDSTNNNLSNISNLNNKFNFNNNDDIIDSECDNNYESYNNNNNNNNNNKNNNNNINDDNRPLVPKILNIHNCIVHSNSNSSNSLIEQSSFPGTPKKRRFIDYLDDENEEDIDYNEENYHSIKNHNHHHHIHNYNHNYNQHSINDDNNRHIHNNNNNNNNNNNNNNNNNINNHNNMNDRIDHNDCTLVNNLTPRDDQNYLKNNSNLEFVNKNNQANNIFNNNNNNNNNNNNNFYNNPFLNQIPSLPFSSLSDNNGDDDDDGIDDGIDDGIDDGIDDIDQEFTYNNYEQYDKEIDSDFDSEISNSFHQNQSPCNNSFKNNNNNNNNNNNNNNNNNNNNNNNNNNNNNNNNSNNGSTSTSSSPCIFSSSFSPSRATISPNRFKKSYKSLNRPLKKFYEETSLSQSSTTTISTSTTISEVFNEKSYSFSSFGSNSFSSLNIKNLNNNNNNNNNNNNNNNNNNNNNNNNNNNNNSNNNNNNNNSNNKNNKGKVCFLNKEIEISLAQEPNDEQNKTKKELEEVKEEEEEEEEEISTIESEKNKDIMMDFYHNTLSKFSEFKIYDQDEPELLEFENNNENNNNNDQDYHYHSFINGRVNRQSNNDLDRFNTQTFNRYNRSINPMALLLEKQGGDDPEDSSDSDSDSDSNSNSDSSDLGNITVRKWKPVEITNSTTTDESNVIKVFKNNKNINQ</sequence>
<evidence type="ECO:0000256" key="1">
    <source>
        <dbReference type="SAM" id="MobiDB-lite"/>
    </source>
</evidence>
<evidence type="ECO:0000305" key="2"/>